<reference key="1">
    <citation type="journal article" date="2001" name="Science">
        <title>Mechanisms of evolution in Rickettsia conorii and R. prowazekii.</title>
        <authorList>
            <person name="Ogata H."/>
            <person name="Audic S."/>
            <person name="Renesto-Audiffren P."/>
            <person name="Fournier P.-E."/>
            <person name="Barbe V."/>
            <person name="Samson D."/>
            <person name="Roux V."/>
            <person name="Cossart P."/>
            <person name="Weissenbach J."/>
            <person name="Claverie J.-M."/>
            <person name="Raoult D."/>
        </authorList>
    </citation>
    <scope>NUCLEOTIDE SEQUENCE [LARGE SCALE GENOMIC DNA]</scope>
    <source>
        <strain>ATCC VR-613 / Malish 7</strain>
    </source>
</reference>
<sequence length="414" mass="47455">MTEKLQPLRGMKDLLPDDYKVHDYIINKARDVGVLYGYKQMSTPIVEYTKVFNRSMGESSDVISKEIYSFLDKSNDFVALRPEFTACIIRSLISNRLQHKLPLKFFSTGPVFRYDRPQAGRQRQFHQLNYEYIGAKGAITDADTLKLAVDILKALEIEQDTTLELNSLGCNESRSVYQQKLVEYLNDFKDQLSEESKIRLSKNPMRILDSKSETDQKIIANAPVLSEYYTDESKEYFEELIQYLDILGVKYSINPRLVRGLDYYCHTAFEFTTKKLGSQSTILAGGRYDGLAKIMGNNDDVPAIGFAAGIERIALMREYNISEVKPVFVLPIGKNNICYALEIVDKLRTENIAIIIESLGKIAKRMQRIFNENAQFIIFIGDEEQANNNLKIKDLKKAEEYIVDFAKALELLKK</sequence>
<feature type="chain" id="PRO_0000136238" description="Histidine--tRNA ligase">
    <location>
        <begin position="1"/>
        <end position="414"/>
    </location>
</feature>
<evidence type="ECO:0000255" key="1">
    <source>
        <dbReference type="HAMAP-Rule" id="MF_00127"/>
    </source>
</evidence>
<evidence type="ECO:0000305" key="2"/>
<keyword id="KW-0030">Aminoacyl-tRNA synthetase</keyword>
<keyword id="KW-0067">ATP-binding</keyword>
<keyword id="KW-0963">Cytoplasm</keyword>
<keyword id="KW-0436">Ligase</keyword>
<keyword id="KW-0547">Nucleotide-binding</keyword>
<keyword id="KW-0648">Protein biosynthesis</keyword>
<gene>
    <name evidence="1" type="primary">hisS</name>
    <name type="ordered locus">RC0412</name>
</gene>
<proteinExistence type="inferred from homology"/>
<dbReference type="EC" id="6.1.1.21" evidence="1"/>
<dbReference type="EMBL" id="AE006914">
    <property type="protein sequence ID" value="AAL02950.1"/>
    <property type="status" value="ALT_INIT"/>
    <property type="molecule type" value="Genomic_DNA"/>
</dbReference>
<dbReference type="PIR" id="D97751">
    <property type="entry name" value="D97751"/>
</dbReference>
<dbReference type="RefSeq" id="WP_014410545.1">
    <property type="nucleotide sequence ID" value="NC_003103.1"/>
</dbReference>
<dbReference type="SMR" id="Q92IK8"/>
<dbReference type="GeneID" id="95362082"/>
<dbReference type="KEGG" id="rco:RC0412"/>
<dbReference type="HOGENOM" id="CLU_025113_1_0_5"/>
<dbReference type="Proteomes" id="UP000000816">
    <property type="component" value="Chromosome"/>
</dbReference>
<dbReference type="GO" id="GO:0005737">
    <property type="term" value="C:cytoplasm"/>
    <property type="evidence" value="ECO:0007669"/>
    <property type="project" value="UniProtKB-SubCell"/>
</dbReference>
<dbReference type="GO" id="GO:0005524">
    <property type="term" value="F:ATP binding"/>
    <property type="evidence" value="ECO:0007669"/>
    <property type="project" value="UniProtKB-UniRule"/>
</dbReference>
<dbReference type="GO" id="GO:0004821">
    <property type="term" value="F:histidine-tRNA ligase activity"/>
    <property type="evidence" value="ECO:0007669"/>
    <property type="project" value="UniProtKB-UniRule"/>
</dbReference>
<dbReference type="GO" id="GO:0006427">
    <property type="term" value="P:histidyl-tRNA aminoacylation"/>
    <property type="evidence" value="ECO:0007669"/>
    <property type="project" value="UniProtKB-UniRule"/>
</dbReference>
<dbReference type="CDD" id="cd00773">
    <property type="entry name" value="HisRS-like_core"/>
    <property type="match status" value="1"/>
</dbReference>
<dbReference type="CDD" id="cd00859">
    <property type="entry name" value="HisRS_anticodon"/>
    <property type="match status" value="1"/>
</dbReference>
<dbReference type="Gene3D" id="3.40.50.800">
    <property type="entry name" value="Anticodon-binding domain"/>
    <property type="match status" value="1"/>
</dbReference>
<dbReference type="Gene3D" id="3.30.930.10">
    <property type="entry name" value="Bira Bifunctional Protein, Domain 2"/>
    <property type="match status" value="1"/>
</dbReference>
<dbReference type="HAMAP" id="MF_00127">
    <property type="entry name" value="His_tRNA_synth"/>
    <property type="match status" value="1"/>
</dbReference>
<dbReference type="InterPro" id="IPR006195">
    <property type="entry name" value="aa-tRNA-synth_II"/>
</dbReference>
<dbReference type="InterPro" id="IPR045864">
    <property type="entry name" value="aa-tRNA-synth_II/BPL/LPL"/>
</dbReference>
<dbReference type="InterPro" id="IPR004154">
    <property type="entry name" value="Anticodon-bd"/>
</dbReference>
<dbReference type="InterPro" id="IPR036621">
    <property type="entry name" value="Anticodon-bd_dom_sf"/>
</dbReference>
<dbReference type="InterPro" id="IPR015807">
    <property type="entry name" value="His-tRNA-ligase"/>
</dbReference>
<dbReference type="InterPro" id="IPR041715">
    <property type="entry name" value="HisRS-like_core"/>
</dbReference>
<dbReference type="InterPro" id="IPR004516">
    <property type="entry name" value="HisRS/HisZ"/>
</dbReference>
<dbReference type="InterPro" id="IPR033656">
    <property type="entry name" value="HisRS_anticodon"/>
</dbReference>
<dbReference type="NCBIfam" id="TIGR00442">
    <property type="entry name" value="hisS"/>
    <property type="match status" value="1"/>
</dbReference>
<dbReference type="PANTHER" id="PTHR43707:SF1">
    <property type="entry name" value="HISTIDINE--TRNA LIGASE, MITOCHONDRIAL-RELATED"/>
    <property type="match status" value="1"/>
</dbReference>
<dbReference type="PANTHER" id="PTHR43707">
    <property type="entry name" value="HISTIDYL-TRNA SYNTHETASE"/>
    <property type="match status" value="1"/>
</dbReference>
<dbReference type="Pfam" id="PF03129">
    <property type="entry name" value="HGTP_anticodon"/>
    <property type="match status" value="1"/>
</dbReference>
<dbReference type="Pfam" id="PF13393">
    <property type="entry name" value="tRNA-synt_His"/>
    <property type="match status" value="1"/>
</dbReference>
<dbReference type="PIRSF" id="PIRSF001549">
    <property type="entry name" value="His-tRNA_synth"/>
    <property type="match status" value="1"/>
</dbReference>
<dbReference type="SUPFAM" id="SSF52954">
    <property type="entry name" value="Class II aaRS ABD-related"/>
    <property type="match status" value="1"/>
</dbReference>
<dbReference type="SUPFAM" id="SSF55681">
    <property type="entry name" value="Class II aaRS and biotin synthetases"/>
    <property type="match status" value="1"/>
</dbReference>
<dbReference type="PROSITE" id="PS50862">
    <property type="entry name" value="AA_TRNA_LIGASE_II"/>
    <property type="match status" value="1"/>
</dbReference>
<name>SYH_RICCN</name>
<protein>
    <recommendedName>
        <fullName evidence="1">Histidine--tRNA ligase</fullName>
        <ecNumber evidence="1">6.1.1.21</ecNumber>
    </recommendedName>
    <alternativeName>
        <fullName evidence="1">Histidyl-tRNA synthetase</fullName>
        <shortName evidence="1">HisRS</shortName>
    </alternativeName>
</protein>
<accession>Q92IK8</accession>
<organism>
    <name type="scientific">Rickettsia conorii (strain ATCC VR-613 / Malish 7)</name>
    <dbReference type="NCBI Taxonomy" id="272944"/>
    <lineage>
        <taxon>Bacteria</taxon>
        <taxon>Pseudomonadati</taxon>
        <taxon>Pseudomonadota</taxon>
        <taxon>Alphaproteobacteria</taxon>
        <taxon>Rickettsiales</taxon>
        <taxon>Rickettsiaceae</taxon>
        <taxon>Rickettsieae</taxon>
        <taxon>Rickettsia</taxon>
        <taxon>spotted fever group</taxon>
    </lineage>
</organism>
<comment type="catalytic activity">
    <reaction evidence="1">
        <text>tRNA(His) + L-histidine + ATP = L-histidyl-tRNA(His) + AMP + diphosphate + H(+)</text>
        <dbReference type="Rhea" id="RHEA:17313"/>
        <dbReference type="Rhea" id="RHEA-COMP:9665"/>
        <dbReference type="Rhea" id="RHEA-COMP:9689"/>
        <dbReference type="ChEBI" id="CHEBI:15378"/>
        <dbReference type="ChEBI" id="CHEBI:30616"/>
        <dbReference type="ChEBI" id="CHEBI:33019"/>
        <dbReference type="ChEBI" id="CHEBI:57595"/>
        <dbReference type="ChEBI" id="CHEBI:78442"/>
        <dbReference type="ChEBI" id="CHEBI:78527"/>
        <dbReference type="ChEBI" id="CHEBI:456215"/>
        <dbReference type="EC" id="6.1.1.21"/>
    </reaction>
</comment>
<comment type="subunit">
    <text evidence="1">Homodimer.</text>
</comment>
<comment type="subcellular location">
    <subcellularLocation>
        <location evidence="1">Cytoplasm</location>
    </subcellularLocation>
</comment>
<comment type="similarity">
    <text evidence="1">Belongs to the class-II aminoacyl-tRNA synthetase family.</text>
</comment>
<comment type="sequence caution" evidence="2">
    <conflict type="erroneous initiation">
        <sequence resource="EMBL-CDS" id="AAL02950"/>
    </conflict>
</comment>